<sequence length="404" mass="46271">MSEKRIEQWEVERYWEIFSSLSNGQPRLNNAQAATVLRNSRLRDEQLEKVWDLADVDGDGELDFEEFCVAMRLIFDLVNGELSEVPPSLPDWLVPESKAHLVQATQALSGREPQFERVEEDDDTPGLKDGFDWYMSPSDKGKYEEIYSANKNHRGELAFSSLQDLYESLSVPDTDIRSAWNLVNPSASSTINKDAALAFLHILNNRHEGYRIPRTIPASLRSSFESNKIDYQLDNVRTAKRWGVDNDTDTSTGRKAKFGDAYLSRLGIGGRTSYKPQGTDFSNTIQDEEWEKVRLRRELAELEKKLAAANTAAEDRKNGRTVAGGPNWALIKKEALQMLEYKERELRELREGTGRVKEGENLERLREDVNTVGEQIEGLRVHLAKRNEVLAVLRRQIEEEKRNR</sequence>
<name>END3_COCIM</name>
<evidence type="ECO:0000250" key="1"/>
<evidence type="ECO:0000255" key="2"/>
<evidence type="ECO:0000255" key="3">
    <source>
        <dbReference type="PROSITE-ProRule" id="PRU00077"/>
    </source>
</evidence>
<evidence type="ECO:0000255" key="4">
    <source>
        <dbReference type="PROSITE-ProRule" id="PRU00448"/>
    </source>
</evidence>
<evidence type="ECO:0000305" key="5"/>
<organism>
    <name type="scientific">Coccidioides immitis (strain RS)</name>
    <name type="common">Valley fever fungus</name>
    <dbReference type="NCBI Taxonomy" id="246410"/>
    <lineage>
        <taxon>Eukaryota</taxon>
        <taxon>Fungi</taxon>
        <taxon>Dikarya</taxon>
        <taxon>Ascomycota</taxon>
        <taxon>Pezizomycotina</taxon>
        <taxon>Eurotiomycetes</taxon>
        <taxon>Eurotiomycetidae</taxon>
        <taxon>Onygenales</taxon>
        <taxon>Onygenaceae</taxon>
        <taxon>Coccidioides</taxon>
    </lineage>
</organism>
<accession>Q1DUU2</accession>
<accession>J3K7I2</accession>
<gene>
    <name type="primary">END3</name>
    <name type="ORF">CIMG_05921</name>
</gene>
<proteinExistence type="inferred from homology"/>
<reference key="1">
    <citation type="journal article" date="2009" name="Genome Res.">
        <title>Comparative genomic analyses of the human fungal pathogens Coccidioides and their relatives.</title>
        <authorList>
            <person name="Sharpton T.J."/>
            <person name="Stajich J.E."/>
            <person name="Rounsley S.D."/>
            <person name="Gardner M.J."/>
            <person name="Wortman J.R."/>
            <person name="Jordar V.S."/>
            <person name="Maiti R."/>
            <person name="Kodira C.D."/>
            <person name="Neafsey D.E."/>
            <person name="Zeng Q."/>
            <person name="Hung C.-Y."/>
            <person name="McMahan C."/>
            <person name="Muszewska A."/>
            <person name="Grynberg M."/>
            <person name="Mandel M.A."/>
            <person name="Kellner E.M."/>
            <person name="Barker B.M."/>
            <person name="Galgiani J.N."/>
            <person name="Orbach M.J."/>
            <person name="Kirkland T.N."/>
            <person name="Cole G.T."/>
            <person name="Henn M.R."/>
            <person name="Birren B.W."/>
            <person name="Taylor J.W."/>
        </authorList>
    </citation>
    <scope>NUCLEOTIDE SEQUENCE [LARGE SCALE GENOMIC DNA]</scope>
    <source>
        <strain>RS</strain>
    </source>
</reference>
<reference key="2">
    <citation type="journal article" date="2010" name="Genome Res.">
        <title>Population genomic sequencing of Coccidioides fungi reveals recent hybridization and transposon control.</title>
        <authorList>
            <person name="Neafsey D.E."/>
            <person name="Barker B.M."/>
            <person name="Sharpton T.J."/>
            <person name="Stajich J.E."/>
            <person name="Park D.J."/>
            <person name="Whiston E."/>
            <person name="Hung C.-Y."/>
            <person name="McMahan C."/>
            <person name="White J."/>
            <person name="Sykes S."/>
            <person name="Heiman D."/>
            <person name="Young S."/>
            <person name="Zeng Q."/>
            <person name="Abouelleil A."/>
            <person name="Aftuck L."/>
            <person name="Bessette D."/>
            <person name="Brown A."/>
            <person name="FitzGerald M."/>
            <person name="Lui A."/>
            <person name="Macdonald J.P."/>
            <person name="Priest M."/>
            <person name="Orbach M.J."/>
            <person name="Galgiani J.N."/>
            <person name="Kirkland T.N."/>
            <person name="Cole G.T."/>
            <person name="Birren B.W."/>
            <person name="Henn M.R."/>
            <person name="Taylor J.W."/>
            <person name="Rounsley S.D."/>
        </authorList>
    </citation>
    <scope>GENOME REANNOTATION</scope>
    <source>
        <strain>RS</strain>
    </source>
</reference>
<feature type="chain" id="PRO_0000349446" description="Actin cytoskeleton-regulatory complex protein END3">
    <location>
        <begin position="1"/>
        <end position="404"/>
    </location>
</feature>
<feature type="domain" description="EH 1" evidence="3">
    <location>
        <begin position="10"/>
        <end position="100"/>
    </location>
</feature>
<feature type="domain" description="EF-hand" evidence="4">
    <location>
        <begin position="42"/>
        <end position="77"/>
    </location>
</feature>
<feature type="domain" description="EH 2" evidence="3">
    <location>
        <begin position="139"/>
        <end position="227"/>
    </location>
</feature>
<feature type="coiled-coil region" evidence="2">
    <location>
        <begin position="280"/>
        <end position="404"/>
    </location>
</feature>
<feature type="binding site" evidence="4">
    <location>
        <position position="55"/>
    </location>
    <ligand>
        <name>Ca(2+)</name>
        <dbReference type="ChEBI" id="CHEBI:29108"/>
    </ligand>
</feature>
<feature type="binding site" evidence="4">
    <location>
        <position position="57"/>
    </location>
    <ligand>
        <name>Ca(2+)</name>
        <dbReference type="ChEBI" id="CHEBI:29108"/>
    </ligand>
</feature>
<feature type="binding site" evidence="4">
    <location>
        <position position="59"/>
    </location>
    <ligand>
        <name>Ca(2+)</name>
        <dbReference type="ChEBI" id="CHEBI:29108"/>
    </ligand>
</feature>
<feature type="binding site" evidence="4">
    <location>
        <position position="61"/>
    </location>
    <ligand>
        <name>Ca(2+)</name>
        <dbReference type="ChEBI" id="CHEBI:29108"/>
    </ligand>
</feature>
<feature type="binding site" evidence="4">
    <location>
        <position position="66"/>
    </location>
    <ligand>
        <name>Ca(2+)</name>
        <dbReference type="ChEBI" id="CHEBI:29108"/>
    </ligand>
</feature>
<dbReference type="EMBL" id="GG704912">
    <property type="protein sequence ID" value="EAS30442.3"/>
    <property type="molecule type" value="Genomic_DNA"/>
</dbReference>
<dbReference type="RefSeq" id="XP_001242025.1">
    <property type="nucleotide sequence ID" value="XM_001242024.2"/>
</dbReference>
<dbReference type="FunCoup" id="Q1DUU2">
    <property type="interactions" value="98"/>
</dbReference>
<dbReference type="STRING" id="246410.Q1DUU2"/>
<dbReference type="GeneID" id="4561578"/>
<dbReference type="KEGG" id="cim:CIMG_05921"/>
<dbReference type="VEuPathDB" id="FungiDB:CIMG_05921"/>
<dbReference type="InParanoid" id="Q1DUU2"/>
<dbReference type="OMA" id="DWLIPES"/>
<dbReference type="OrthoDB" id="1716625at2759"/>
<dbReference type="Proteomes" id="UP000001261">
    <property type="component" value="Unassembled WGS sequence"/>
</dbReference>
<dbReference type="GO" id="GO:0030479">
    <property type="term" value="C:actin cortical patch"/>
    <property type="evidence" value="ECO:0007669"/>
    <property type="project" value="UniProtKB-SubCell"/>
</dbReference>
<dbReference type="GO" id="GO:0010008">
    <property type="term" value="C:endosome membrane"/>
    <property type="evidence" value="ECO:0007669"/>
    <property type="project" value="UniProtKB-SubCell"/>
</dbReference>
<dbReference type="GO" id="GO:0005886">
    <property type="term" value="C:plasma membrane"/>
    <property type="evidence" value="ECO:0007669"/>
    <property type="project" value="UniProtKB-SubCell"/>
</dbReference>
<dbReference type="GO" id="GO:0003779">
    <property type="term" value="F:actin binding"/>
    <property type="evidence" value="ECO:0007669"/>
    <property type="project" value="UniProtKB-KW"/>
</dbReference>
<dbReference type="GO" id="GO:0005509">
    <property type="term" value="F:calcium ion binding"/>
    <property type="evidence" value="ECO:0007669"/>
    <property type="project" value="InterPro"/>
</dbReference>
<dbReference type="GO" id="GO:0007015">
    <property type="term" value="P:actin filament organization"/>
    <property type="evidence" value="ECO:0007669"/>
    <property type="project" value="InterPro"/>
</dbReference>
<dbReference type="GO" id="GO:0006897">
    <property type="term" value="P:endocytosis"/>
    <property type="evidence" value="ECO:0007669"/>
    <property type="project" value="UniProtKB-KW"/>
</dbReference>
<dbReference type="GO" id="GO:0016197">
    <property type="term" value="P:endosomal transport"/>
    <property type="evidence" value="ECO:0007669"/>
    <property type="project" value="TreeGrafter"/>
</dbReference>
<dbReference type="CDD" id="cd00052">
    <property type="entry name" value="EH"/>
    <property type="match status" value="1"/>
</dbReference>
<dbReference type="FunFam" id="1.10.238.10:FF:000339">
    <property type="entry name" value="Actin cytoskeleton-regulatory complex protein END3"/>
    <property type="match status" value="1"/>
</dbReference>
<dbReference type="FunFam" id="1.10.238.10:FF:000323">
    <property type="entry name" value="Actin cytoskeleton-regulatory complex protein end3"/>
    <property type="match status" value="1"/>
</dbReference>
<dbReference type="Gene3D" id="1.10.238.10">
    <property type="entry name" value="EF-hand"/>
    <property type="match status" value="2"/>
</dbReference>
<dbReference type="InterPro" id="IPR011992">
    <property type="entry name" value="EF-hand-dom_pair"/>
</dbReference>
<dbReference type="InterPro" id="IPR018247">
    <property type="entry name" value="EF_Hand_1_Ca_BS"/>
</dbReference>
<dbReference type="InterPro" id="IPR002048">
    <property type="entry name" value="EF_hand_dom"/>
</dbReference>
<dbReference type="InterPro" id="IPR000261">
    <property type="entry name" value="EH_dom"/>
</dbReference>
<dbReference type="InterPro" id="IPR025604">
    <property type="entry name" value="End3"/>
</dbReference>
<dbReference type="PANTHER" id="PTHR11216:SF74">
    <property type="entry name" value="ACTIN CYTOSKELETON-REGULATORY COMPLEX PROTEIN END3"/>
    <property type="match status" value="1"/>
</dbReference>
<dbReference type="PANTHER" id="PTHR11216">
    <property type="entry name" value="EH DOMAIN"/>
    <property type="match status" value="1"/>
</dbReference>
<dbReference type="Pfam" id="PF12763">
    <property type="entry name" value="EH"/>
    <property type="match status" value="1"/>
</dbReference>
<dbReference type="Pfam" id="PF12761">
    <property type="entry name" value="End3"/>
    <property type="match status" value="1"/>
</dbReference>
<dbReference type="SMART" id="SM00054">
    <property type="entry name" value="EFh"/>
    <property type="match status" value="1"/>
</dbReference>
<dbReference type="SMART" id="SM00027">
    <property type="entry name" value="EH"/>
    <property type="match status" value="2"/>
</dbReference>
<dbReference type="SUPFAM" id="SSF47473">
    <property type="entry name" value="EF-hand"/>
    <property type="match status" value="2"/>
</dbReference>
<dbReference type="PROSITE" id="PS00018">
    <property type="entry name" value="EF_HAND_1"/>
    <property type="match status" value="1"/>
</dbReference>
<dbReference type="PROSITE" id="PS50222">
    <property type="entry name" value="EF_HAND_2"/>
    <property type="match status" value="1"/>
</dbReference>
<dbReference type="PROSITE" id="PS50031">
    <property type="entry name" value="EH"/>
    <property type="match status" value="2"/>
</dbReference>
<protein>
    <recommendedName>
        <fullName>Actin cytoskeleton-regulatory complex protein END3</fullName>
    </recommendedName>
    <alternativeName>
        <fullName>Endocytosis protein 3</fullName>
    </alternativeName>
</protein>
<comment type="function">
    <text evidence="1">Component of the PAN1 actin cytoskeleton-regulatory complex required for the internalization of endosomes during actin-coupled endocytosis. The complex links the site of endocytosis to the cell membrane-associated actin cytoskeleton. Mediates uptake of external molecules and vacuolar degradation of plasma membrane proteins. Plays a role in the proper organization of the cell membrane-associated actin cytoskeleton and promotes its destabilization (By similarity).</text>
</comment>
<comment type="subunit">
    <text evidence="1">Component of the PAN1 actin cytoskeleton-regulatory complex.</text>
</comment>
<comment type="subcellular location">
    <subcellularLocation>
        <location evidence="1">Cell membrane</location>
        <topology evidence="1">Peripheral membrane protein</topology>
        <orientation evidence="1">Cytoplasmic side</orientation>
    </subcellularLocation>
    <subcellularLocation>
        <location evidence="1">Endosome membrane</location>
        <topology evidence="1">Peripheral membrane protein</topology>
        <orientation evidence="1">Cytoplasmic side</orientation>
    </subcellularLocation>
    <subcellularLocation>
        <location evidence="1">Cytoplasm</location>
        <location evidence="1">Cytoskeleton</location>
        <location evidence="1">Actin patch</location>
    </subcellularLocation>
    <text evidence="1">Cytoplasmic and cortical actin patches.</text>
</comment>
<comment type="similarity">
    <text evidence="5">Belongs to the END3 family.</text>
</comment>
<keyword id="KW-0009">Actin-binding</keyword>
<keyword id="KW-0106">Calcium</keyword>
<keyword id="KW-1003">Cell membrane</keyword>
<keyword id="KW-0175">Coiled coil</keyword>
<keyword id="KW-0963">Cytoplasm</keyword>
<keyword id="KW-0206">Cytoskeleton</keyword>
<keyword id="KW-0254">Endocytosis</keyword>
<keyword id="KW-0967">Endosome</keyword>
<keyword id="KW-0472">Membrane</keyword>
<keyword id="KW-0479">Metal-binding</keyword>
<keyword id="KW-1185">Reference proteome</keyword>
<keyword id="KW-0677">Repeat</keyword>